<geneLocation type="plasmid">
    <name>pTRK160</name>
</geneLocation>
<proteinExistence type="predicted"/>
<sequence length="124" mass="14533">MTKHYKIIGLRILSWVITITGLIIFIGNVHEYGLHFTYNQVLAIIIVILLLVTTMYFSVTPKLLKWNEKYELVWWLCYLCAPIYLFLTNLYNSTDLGYTIKFWLFFGGGAALIIISKYILKNKK</sequence>
<name>YLA2_LACAI</name>
<accession>P29471</accession>
<protein>
    <recommendedName>
        <fullName>Uncharacterized 14.5 kDa protein in laf 3'region</fullName>
    </recommendedName>
</protein>
<reference key="1">
    <citation type="journal article" date="1993" name="Appl. Environ. Microbiol.">
        <title>Molecular analysis of the lactacin F operon.</title>
        <authorList>
            <person name="Fremaux C."/>
            <person name="Ahn C."/>
            <person name="Klaenhammer T.R."/>
        </authorList>
    </citation>
    <scope>NUCLEOTIDE SEQUENCE [GENOMIC DNA]</scope>
    <source>
        <strain>11088</strain>
    </source>
</reference>
<feature type="chain" id="PRO_0000066286" description="Uncharacterized 14.5 kDa protein in laf 3'region">
    <location>
        <begin position="1"/>
        <end position="124"/>
    </location>
</feature>
<organism>
    <name type="scientific">Lactobacillus acidophilus</name>
    <dbReference type="NCBI Taxonomy" id="1579"/>
    <lineage>
        <taxon>Bacteria</taxon>
        <taxon>Bacillati</taxon>
        <taxon>Bacillota</taxon>
        <taxon>Bacilli</taxon>
        <taxon>Lactobacillales</taxon>
        <taxon>Lactobacillaceae</taxon>
        <taxon>Lactobacillus</taxon>
    </lineage>
</organism>
<keyword id="KW-0614">Plasmid</keyword>
<dbReference type="EMBL" id="M57961">
    <property type="protein sequence ID" value="AAA16639.1"/>
    <property type="molecule type" value="Unassigned_DNA"/>
</dbReference>
<dbReference type="SMR" id="P29471"/>
<dbReference type="InterPro" id="IPR020370">
    <property type="entry name" value="DUF5504"/>
</dbReference>
<dbReference type="Pfam" id="PF17608">
    <property type="entry name" value="DUF5504"/>
    <property type="match status" value="1"/>
</dbReference>